<name>ACTD_PHYPO</name>
<accession>P24263</accession>
<gene>
    <name type="primary">ARDD</name>
</gene>
<dbReference type="EC" id="3.6.4.-" evidence="1"/>
<dbReference type="EMBL" id="M59234">
    <property type="protein sequence ID" value="AAA29973.1"/>
    <property type="molecule type" value="Genomic_DNA"/>
</dbReference>
<dbReference type="PIR" id="JT0596">
    <property type="entry name" value="JT0596"/>
</dbReference>
<dbReference type="SMR" id="P24263"/>
<dbReference type="GO" id="GO:0015629">
    <property type="term" value="C:actin cytoskeleton"/>
    <property type="evidence" value="ECO:0007669"/>
    <property type="project" value="UniProtKB-ARBA"/>
</dbReference>
<dbReference type="GO" id="GO:0005737">
    <property type="term" value="C:cytoplasm"/>
    <property type="evidence" value="ECO:0007669"/>
    <property type="project" value="UniProtKB-KW"/>
</dbReference>
<dbReference type="GO" id="GO:0005524">
    <property type="term" value="F:ATP binding"/>
    <property type="evidence" value="ECO:0007669"/>
    <property type="project" value="UniProtKB-KW"/>
</dbReference>
<dbReference type="GO" id="GO:0016787">
    <property type="term" value="F:hydrolase activity"/>
    <property type="evidence" value="ECO:0007669"/>
    <property type="project" value="UniProtKB-KW"/>
</dbReference>
<dbReference type="GO" id="GO:0006909">
    <property type="term" value="P:phagocytosis"/>
    <property type="evidence" value="ECO:0007669"/>
    <property type="project" value="UniProtKB-ARBA"/>
</dbReference>
<dbReference type="FunFam" id="3.30.420.40:FF:000291">
    <property type="entry name" value="Actin, alpha skeletal muscle"/>
    <property type="match status" value="1"/>
</dbReference>
<dbReference type="FunFam" id="3.90.640.10:FF:000047">
    <property type="entry name" value="Actin, alpha skeletal muscle"/>
    <property type="match status" value="1"/>
</dbReference>
<dbReference type="FunFam" id="3.30.420.40:FF:000404">
    <property type="entry name" value="Major actin"/>
    <property type="match status" value="1"/>
</dbReference>
<dbReference type="FunFam" id="3.30.420.40:FF:000058">
    <property type="entry name" value="Putative actin-related protein 5"/>
    <property type="match status" value="1"/>
</dbReference>
<dbReference type="Gene3D" id="3.30.420.40">
    <property type="match status" value="2"/>
</dbReference>
<dbReference type="Gene3D" id="3.90.640.10">
    <property type="entry name" value="Actin, Chain A, domain 4"/>
    <property type="match status" value="1"/>
</dbReference>
<dbReference type="InterPro" id="IPR004000">
    <property type="entry name" value="Actin"/>
</dbReference>
<dbReference type="InterPro" id="IPR020902">
    <property type="entry name" value="Actin/actin-like_CS"/>
</dbReference>
<dbReference type="InterPro" id="IPR004001">
    <property type="entry name" value="Actin_CS"/>
</dbReference>
<dbReference type="InterPro" id="IPR043129">
    <property type="entry name" value="ATPase_NBD"/>
</dbReference>
<dbReference type="InterPro" id="IPR018181">
    <property type="entry name" value="Heat_shock_70_CS"/>
</dbReference>
<dbReference type="PANTHER" id="PTHR11937">
    <property type="entry name" value="ACTIN"/>
    <property type="match status" value="1"/>
</dbReference>
<dbReference type="Pfam" id="PF00022">
    <property type="entry name" value="Actin"/>
    <property type="match status" value="1"/>
</dbReference>
<dbReference type="PRINTS" id="PR00190">
    <property type="entry name" value="ACTIN"/>
</dbReference>
<dbReference type="SMART" id="SM00268">
    <property type="entry name" value="ACTIN"/>
    <property type="match status" value="1"/>
</dbReference>
<dbReference type="SUPFAM" id="SSF53067">
    <property type="entry name" value="Actin-like ATPase domain"/>
    <property type="match status" value="2"/>
</dbReference>
<dbReference type="PROSITE" id="PS00406">
    <property type="entry name" value="ACTINS_1"/>
    <property type="match status" value="1"/>
</dbReference>
<dbReference type="PROSITE" id="PS01132">
    <property type="entry name" value="ACTINS_ACT_LIKE"/>
    <property type="match status" value="1"/>
</dbReference>
<comment type="function">
    <text>Actins are highly conserved proteins that are involved in various types of cell motility and are ubiquitously expressed in all eukaryotic cells.</text>
</comment>
<comment type="catalytic activity">
    <reaction evidence="1">
        <text>ATP + H2O = ADP + phosphate + H(+)</text>
        <dbReference type="Rhea" id="RHEA:13065"/>
        <dbReference type="ChEBI" id="CHEBI:15377"/>
        <dbReference type="ChEBI" id="CHEBI:15378"/>
        <dbReference type="ChEBI" id="CHEBI:30616"/>
        <dbReference type="ChEBI" id="CHEBI:43474"/>
        <dbReference type="ChEBI" id="CHEBI:456216"/>
    </reaction>
</comment>
<comment type="subcellular location">
    <subcellularLocation>
        <location>Cytoplasm</location>
        <location>Cytoskeleton</location>
    </subcellularLocation>
</comment>
<comment type="developmental stage">
    <text>Highest levels of ardD mRNA in spherules, less in plasmodia.</text>
</comment>
<comment type="similarity">
    <text evidence="2">Belongs to the actin family.</text>
</comment>
<evidence type="ECO:0000250" key="1">
    <source>
        <dbReference type="UniProtKB" id="P68137"/>
    </source>
</evidence>
<evidence type="ECO:0000305" key="2"/>
<keyword id="KW-0067">ATP-binding</keyword>
<keyword id="KW-0963">Cytoplasm</keyword>
<keyword id="KW-0206">Cytoskeleton</keyword>
<keyword id="KW-0378">Hydrolase</keyword>
<keyword id="KW-0547">Nucleotide-binding</keyword>
<protein>
    <recommendedName>
        <fullName>Actin, spherule isoform</fullName>
        <ecNumber evidence="1">3.6.4.-</ecNumber>
    </recommendedName>
</protein>
<sequence length="367" mass="40650">MEGEAVVIDNGSGMCKAGFAGDNTPRAMFPSIVGHPRHTEAMMEIGHKHSYVGDEAQSKRGILALKYPIEQGIVNNWDDMEQIWHHTFYNEMRVAPEEHPVLLTEAPLNPKANREKMTQIMFESFSAPAMYVAIQAVLSLRASGRTTGIVLDSGDGASHAVPIYEGCALPHAILRIDAAGRDLTHYLRLMLAERGYAFNTTAELEIVRDIKEKLAYVALDFEQEMQTASSLNYELPDGRVVTIGNERFRCSEVLFQSCFLGMESAGIPETTYNSIMKCDVDIRKDLFGNLVLSGGTTMVPGIADRVQKELTAFEPTMKIKIIAPPGRQYSAWIGGSILASLSTFEQMCISKKEYNECGPSIVHRKCF</sequence>
<organism>
    <name type="scientific">Physarum polycephalum</name>
    <name type="common">Slime mold</name>
    <dbReference type="NCBI Taxonomy" id="5791"/>
    <lineage>
        <taxon>Eukaryota</taxon>
        <taxon>Amoebozoa</taxon>
        <taxon>Evosea</taxon>
        <taxon>Eumycetozoa</taxon>
        <taxon>Myxogastria</taxon>
        <taxon>Myxogastromycetidae</taxon>
        <taxon>Physariida</taxon>
        <taxon>Physaraceae</taxon>
        <taxon>Physarum</taxon>
    </lineage>
</organism>
<proteinExistence type="evidence at transcript level"/>
<reference key="1">
    <citation type="journal article" date="1991" name="Gene">
        <title>An unusual actin-encoding gene in Physarum polycephalum.</title>
        <authorList>
            <person name="Adam L."/>
            <person name="Laroche A."/>
            <person name="Barden A."/>
            <person name="Lemieux G."/>
            <person name="Pallotta D."/>
        </authorList>
    </citation>
    <scope>NUCLEOTIDE SEQUENCE [GENOMIC DNA]</scope>
</reference>
<feature type="initiator methionine" description="Removed">
    <location>
        <position position="1"/>
    </location>
</feature>
<feature type="chain" id="PRO_0000088989" description="Actin, spherule isoform">
    <location>
        <begin position="2"/>
        <end position="367"/>
    </location>
</feature>